<name>PER21_ARATH</name>
<accession>Q42580</accession>
<accession>Q43733</accession>
<accession>Q93YM9</accession>
<evidence type="ECO:0000255" key="1"/>
<evidence type="ECO:0000255" key="2">
    <source>
        <dbReference type="PROSITE-ProRule" id="PRU00297"/>
    </source>
</evidence>
<evidence type="ECO:0000269" key="3">
    <source>
    </source>
</evidence>
<evidence type="ECO:0000269" key="4">
    <source>
    </source>
</evidence>
<evidence type="ECO:0000269" key="5">
    <source>
    </source>
</evidence>
<evidence type="ECO:0000269" key="6">
    <source>
    </source>
</evidence>
<evidence type="ECO:0000269" key="7">
    <source ref="11"/>
</evidence>
<evidence type="ECO:0000305" key="8"/>
<organism>
    <name type="scientific">Arabidopsis thaliana</name>
    <name type="common">Mouse-ear cress</name>
    <dbReference type="NCBI Taxonomy" id="3702"/>
    <lineage>
        <taxon>Eukaryota</taxon>
        <taxon>Viridiplantae</taxon>
        <taxon>Streptophyta</taxon>
        <taxon>Embryophyta</taxon>
        <taxon>Tracheophyta</taxon>
        <taxon>Spermatophyta</taxon>
        <taxon>Magnoliopsida</taxon>
        <taxon>eudicotyledons</taxon>
        <taxon>Gunneridae</taxon>
        <taxon>Pentapetalae</taxon>
        <taxon>rosids</taxon>
        <taxon>malvids</taxon>
        <taxon>Brassicales</taxon>
        <taxon>Brassicaceae</taxon>
        <taxon>Camelineae</taxon>
        <taxon>Arabidopsis</taxon>
    </lineage>
</organism>
<dbReference type="EC" id="1.11.1.7"/>
<dbReference type="EMBL" id="X98317">
    <property type="protein sequence ID" value="CAA66961.1"/>
    <property type="molecule type" value="mRNA"/>
</dbReference>
<dbReference type="EMBL" id="X98190">
    <property type="protein sequence ID" value="CAA66863.1"/>
    <property type="molecule type" value="mRNA"/>
</dbReference>
<dbReference type="EMBL" id="AC006260">
    <property type="protein sequence ID" value="AAD18146.1"/>
    <property type="molecule type" value="Genomic_DNA"/>
</dbReference>
<dbReference type="EMBL" id="CP002685">
    <property type="protein sequence ID" value="AEC09354.1"/>
    <property type="molecule type" value="Genomic_DNA"/>
</dbReference>
<dbReference type="EMBL" id="AY087458">
    <property type="protein sequence ID" value="AAM65003.1"/>
    <property type="molecule type" value="mRNA"/>
</dbReference>
<dbReference type="EMBL" id="AY059933">
    <property type="protein sequence ID" value="AAL24415.1"/>
    <property type="status" value="ALT_INIT"/>
    <property type="molecule type" value="mRNA"/>
</dbReference>
<dbReference type="EMBL" id="AY081588">
    <property type="protein sequence ID" value="AAM10150.1"/>
    <property type="molecule type" value="mRNA"/>
</dbReference>
<dbReference type="PIR" id="H84788">
    <property type="entry name" value="H84788"/>
</dbReference>
<dbReference type="RefSeq" id="NP_181250.1">
    <molecule id="Q42580-1"/>
    <property type="nucleotide sequence ID" value="NM_129269.4"/>
</dbReference>
<dbReference type="SMR" id="Q42580"/>
<dbReference type="BioGRID" id="3633">
    <property type="interactions" value="1"/>
</dbReference>
<dbReference type="FunCoup" id="Q42580">
    <property type="interactions" value="252"/>
</dbReference>
<dbReference type="IntAct" id="Q42580">
    <property type="interactions" value="1"/>
</dbReference>
<dbReference type="STRING" id="3702.Q42580"/>
<dbReference type="PeroxiBase" id="240">
    <property type="entry name" value="AtPrx21"/>
</dbReference>
<dbReference type="GlyCosmos" id="Q42580">
    <property type="glycosylation" value="1 site, No reported glycans"/>
</dbReference>
<dbReference type="GlyGen" id="Q42580">
    <property type="glycosylation" value="2 sites"/>
</dbReference>
<dbReference type="PaxDb" id="3702-AT2G37130.1"/>
<dbReference type="ProteomicsDB" id="236692">
    <molecule id="Q42580-1"/>
</dbReference>
<dbReference type="EnsemblPlants" id="AT2G37130.1">
    <molecule id="Q42580-1"/>
    <property type="protein sequence ID" value="AT2G37130.1"/>
    <property type="gene ID" value="AT2G37130"/>
</dbReference>
<dbReference type="GeneID" id="818289"/>
<dbReference type="Gramene" id="AT2G37130.1">
    <molecule id="Q42580-1"/>
    <property type="protein sequence ID" value="AT2G37130.1"/>
    <property type="gene ID" value="AT2G37130"/>
</dbReference>
<dbReference type="KEGG" id="ath:AT2G37130"/>
<dbReference type="Araport" id="AT2G37130"/>
<dbReference type="TAIR" id="AT2G37130"/>
<dbReference type="eggNOG" id="ENOG502QU16">
    <property type="taxonomic scope" value="Eukaryota"/>
</dbReference>
<dbReference type="InParanoid" id="Q42580"/>
<dbReference type="OrthoDB" id="2113341at2759"/>
<dbReference type="PhylomeDB" id="Q42580"/>
<dbReference type="BioCyc" id="ARA:AT2G37130-MONOMER"/>
<dbReference type="PRO" id="PR:Q42580"/>
<dbReference type="Proteomes" id="UP000006548">
    <property type="component" value="Chromosome 2"/>
</dbReference>
<dbReference type="ExpressionAtlas" id="Q42580">
    <property type="expression patterns" value="baseline and differential"/>
</dbReference>
<dbReference type="GO" id="GO:0020037">
    <property type="term" value="F:heme binding"/>
    <property type="evidence" value="ECO:0007669"/>
    <property type="project" value="InterPro"/>
</dbReference>
<dbReference type="GO" id="GO:0140825">
    <property type="term" value="F:lactoperoxidase activity"/>
    <property type="evidence" value="ECO:0007669"/>
    <property type="project" value="UniProtKB-EC"/>
</dbReference>
<dbReference type="GO" id="GO:0046872">
    <property type="term" value="F:metal ion binding"/>
    <property type="evidence" value="ECO:0007669"/>
    <property type="project" value="UniProtKB-KW"/>
</dbReference>
<dbReference type="GO" id="GO:0050832">
    <property type="term" value="P:defense response to fungus"/>
    <property type="evidence" value="ECO:0000315"/>
    <property type="project" value="TAIR"/>
</dbReference>
<dbReference type="GO" id="GO:0042744">
    <property type="term" value="P:hydrogen peroxide catabolic process"/>
    <property type="evidence" value="ECO:0007669"/>
    <property type="project" value="UniProtKB-KW"/>
</dbReference>
<dbReference type="GO" id="GO:0006979">
    <property type="term" value="P:response to oxidative stress"/>
    <property type="evidence" value="ECO:0007669"/>
    <property type="project" value="InterPro"/>
</dbReference>
<dbReference type="GO" id="GO:0048511">
    <property type="term" value="P:rhythmic process"/>
    <property type="evidence" value="ECO:0007669"/>
    <property type="project" value="UniProtKB-KW"/>
</dbReference>
<dbReference type="CDD" id="cd00693">
    <property type="entry name" value="secretory_peroxidase"/>
    <property type="match status" value="1"/>
</dbReference>
<dbReference type="FunFam" id="1.10.420.10:FF:000007">
    <property type="entry name" value="Peroxidase"/>
    <property type="match status" value="1"/>
</dbReference>
<dbReference type="FunFam" id="1.10.520.10:FF:000010">
    <property type="entry name" value="Peroxidase"/>
    <property type="match status" value="1"/>
</dbReference>
<dbReference type="Gene3D" id="1.10.520.10">
    <property type="match status" value="1"/>
</dbReference>
<dbReference type="Gene3D" id="1.10.420.10">
    <property type="entry name" value="Peroxidase, domain 2"/>
    <property type="match status" value="1"/>
</dbReference>
<dbReference type="InterPro" id="IPR002016">
    <property type="entry name" value="Haem_peroxidase"/>
</dbReference>
<dbReference type="InterPro" id="IPR010255">
    <property type="entry name" value="Haem_peroxidase_sf"/>
</dbReference>
<dbReference type="InterPro" id="IPR000823">
    <property type="entry name" value="Peroxidase_pln"/>
</dbReference>
<dbReference type="InterPro" id="IPR033905">
    <property type="entry name" value="Secretory_peroxidase"/>
</dbReference>
<dbReference type="PANTHER" id="PTHR31517">
    <property type="match status" value="1"/>
</dbReference>
<dbReference type="PANTHER" id="PTHR31517:SF80">
    <property type="entry name" value="PEROXIDASE"/>
    <property type="match status" value="1"/>
</dbReference>
<dbReference type="Pfam" id="PF00141">
    <property type="entry name" value="peroxidase"/>
    <property type="match status" value="1"/>
</dbReference>
<dbReference type="PRINTS" id="PR00458">
    <property type="entry name" value="PEROXIDASE"/>
</dbReference>
<dbReference type="PRINTS" id="PR00461">
    <property type="entry name" value="PLPEROXIDASE"/>
</dbReference>
<dbReference type="SUPFAM" id="SSF48113">
    <property type="entry name" value="Heme-dependent peroxidases"/>
    <property type="match status" value="1"/>
</dbReference>
<dbReference type="PROSITE" id="PS50873">
    <property type="entry name" value="PEROXIDASE_4"/>
    <property type="match status" value="1"/>
</dbReference>
<protein>
    <recommendedName>
        <fullName>Peroxidase 21</fullName>
        <shortName>Atperox P21</shortName>
        <ecNumber>1.11.1.7</ecNumber>
    </recommendedName>
    <alternativeName>
        <fullName>ATP2a/ATP2b</fullName>
    </alternativeName>
    <alternativeName>
        <fullName>PRXR5</fullName>
    </alternativeName>
</protein>
<sequence length="327" mass="36741">MANAKPFCLLGFFCLLLQLFSIFHIGNGELEMNYYKESCPKAEEIIRQQVETLYYKHGNTAVSWLRNLFHDCVVKSCDASLLLETARGVESEQKSKRSFGMRNFKYVKIIKDALEKECPSTVSCADIVALSARDGIVMLKGPKIEMIKTGRRDSRGSYLGDVETLIPNHNDSLSSVISTFNSIGIDVEATVALLGAHSVGRVHCVNLVHRLYPTIDPTLDPSYALYLKKRCPSPTPDPNAVLYSRNDRETPMVVDNMYYKNIMAHKGLLVIDDELATDPRTAPFVAKMAADNNYFHEQFSRGVRLLSETNPLTGDQGEIRKDCRYVN</sequence>
<keyword id="KW-0025">Alternative splicing</keyword>
<keyword id="KW-0090">Biological rhythms</keyword>
<keyword id="KW-0106">Calcium</keyword>
<keyword id="KW-1015">Disulfide bond</keyword>
<keyword id="KW-0325">Glycoprotein</keyword>
<keyword id="KW-0349">Heme</keyword>
<keyword id="KW-0376">Hydrogen peroxide</keyword>
<keyword id="KW-0408">Iron</keyword>
<keyword id="KW-0479">Metal-binding</keyword>
<keyword id="KW-0560">Oxidoreductase</keyword>
<keyword id="KW-0575">Peroxidase</keyword>
<keyword id="KW-1185">Reference proteome</keyword>
<keyword id="KW-0732">Signal</keyword>
<proteinExistence type="evidence at protein level"/>
<gene>
    <name type="primary">PER21</name>
    <name type="synonym">P21</name>
    <name type="ordered locus">At2g37130</name>
    <name type="ORF">T2N18.11</name>
</gene>
<comment type="function">
    <text>Removal of H(2)O(2), oxidation of toxic reductants, biosynthesis and degradation of lignin, suberization, auxin catabolism, response to environmental stresses such as wounding, pathogen attack and oxidative stress. These functions might be dependent on each isozyme/isoform in each plant tissue.</text>
</comment>
<comment type="function">
    <text>Might function as heat shock-like defense protein. May be implicated in the systemic acquired resistance response.</text>
</comment>
<comment type="catalytic activity">
    <reaction>
        <text>2 a phenolic donor + H2O2 = 2 a phenolic radical donor + 2 H2O</text>
        <dbReference type="Rhea" id="RHEA:56136"/>
        <dbReference type="ChEBI" id="CHEBI:15377"/>
        <dbReference type="ChEBI" id="CHEBI:16240"/>
        <dbReference type="ChEBI" id="CHEBI:139520"/>
        <dbReference type="ChEBI" id="CHEBI:139521"/>
        <dbReference type="EC" id="1.11.1.7"/>
    </reaction>
</comment>
<comment type="cofactor">
    <cofactor evidence="2">
        <name>heme b</name>
        <dbReference type="ChEBI" id="CHEBI:60344"/>
    </cofactor>
    <text evidence="2">Binds 1 heme b (iron(II)-protoporphyrin IX) group per subunit.</text>
</comment>
<comment type="cofactor">
    <cofactor evidence="2">
        <name>Ca(2+)</name>
        <dbReference type="ChEBI" id="CHEBI:29108"/>
    </cofactor>
    <text evidence="2">Binds 2 calcium ions per subunit.</text>
</comment>
<comment type="alternative products">
    <event type="alternative splicing"/>
    <isoform>
        <id>Q42580-1</id>
        <name>1</name>
        <sequence type="displayed"/>
    </isoform>
    <text>A number of isoforms are produced. According to EST sequences.</text>
</comment>
<comment type="tissue specificity">
    <text>Preferentially expressed in roots and leaves, slightly in stems.</text>
</comment>
<comment type="developmental stage">
    <text evidence="7">Up-regulated during leaf development.</text>
</comment>
<comment type="induction">
    <text evidence="3 4 5 6">Late induced after mechanical wounding. Enhanced expression following incompatible bacterial pathogen attack. Expressed under a diurnal rhythm (circadian clock control).</text>
</comment>
<comment type="miscellaneous">
    <text>There are 73 peroxidase genes in A.thaliana.</text>
</comment>
<comment type="similarity">
    <text evidence="2">Belongs to the peroxidase family. Classical plant (class III) peroxidase subfamily.</text>
</comment>
<comment type="sequence caution" evidence="8">
    <conflict type="erroneous initiation">
        <sequence resource="EMBL-CDS" id="AAL24415"/>
    </conflict>
</comment>
<feature type="signal peptide" evidence="1">
    <location>
        <begin position="1"/>
        <end position="28"/>
    </location>
</feature>
<feature type="chain" id="PRO_0000023687" description="Peroxidase 21">
    <location>
        <begin position="29"/>
        <end position="327"/>
    </location>
</feature>
<feature type="active site" description="Proton acceptor">
    <location>
        <position position="70"/>
    </location>
</feature>
<feature type="binding site" evidence="2">
    <location>
        <position position="71"/>
    </location>
    <ligand>
        <name>Ca(2+)</name>
        <dbReference type="ChEBI" id="CHEBI:29108"/>
        <label>1</label>
    </ligand>
</feature>
<feature type="binding site" evidence="2">
    <location>
        <position position="74"/>
    </location>
    <ligand>
        <name>Ca(2+)</name>
        <dbReference type="ChEBI" id="CHEBI:29108"/>
        <label>1</label>
    </ligand>
</feature>
<feature type="binding site" evidence="2">
    <location>
        <position position="78"/>
    </location>
    <ligand>
        <name>Ca(2+)</name>
        <dbReference type="ChEBI" id="CHEBI:29108"/>
        <label>1</label>
    </ligand>
</feature>
<feature type="binding site" evidence="2">
    <location>
        <position position="80"/>
    </location>
    <ligand>
        <name>Ca(2+)</name>
        <dbReference type="ChEBI" id="CHEBI:29108"/>
        <label>1</label>
    </ligand>
</feature>
<feature type="binding site" evidence="2">
    <location>
        <position position="167"/>
    </location>
    <ligand>
        <name>substrate</name>
    </ligand>
</feature>
<feature type="binding site" description="axial binding residue" evidence="2">
    <location>
        <position position="197"/>
    </location>
    <ligand>
        <name>heme b</name>
        <dbReference type="ChEBI" id="CHEBI:60344"/>
    </ligand>
    <ligandPart>
        <name>Fe</name>
        <dbReference type="ChEBI" id="CHEBI:18248"/>
    </ligandPart>
</feature>
<feature type="binding site" evidence="2">
    <location>
        <position position="198"/>
    </location>
    <ligand>
        <name>Ca(2+)</name>
        <dbReference type="ChEBI" id="CHEBI:29108"/>
        <label>2</label>
    </ligand>
</feature>
<feature type="binding site" evidence="2">
    <location>
        <position position="247"/>
    </location>
    <ligand>
        <name>Ca(2+)</name>
        <dbReference type="ChEBI" id="CHEBI:29108"/>
        <label>2</label>
    </ligand>
</feature>
<feature type="binding site" evidence="2">
    <location>
        <position position="250"/>
    </location>
    <ligand>
        <name>Ca(2+)</name>
        <dbReference type="ChEBI" id="CHEBI:29108"/>
        <label>2</label>
    </ligand>
</feature>
<feature type="binding site" evidence="2">
    <location>
        <position position="255"/>
    </location>
    <ligand>
        <name>Ca(2+)</name>
        <dbReference type="ChEBI" id="CHEBI:29108"/>
        <label>2</label>
    </ligand>
</feature>
<feature type="site" description="Transition state stabilizer" evidence="2">
    <location>
        <position position="66"/>
    </location>
</feature>
<feature type="glycosylation site" description="N-linked (GlcNAc...) asparagine" evidence="1">
    <location>
        <position position="170"/>
    </location>
</feature>
<feature type="disulfide bond" evidence="2">
    <location>
        <begin position="39"/>
        <end position="118"/>
    </location>
</feature>
<feature type="disulfide bond" evidence="2">
    <location>
        <begin position="72"/>
        <end position="77"/>
    </location>
</feature>
<feature type="disulfide bond" evidence="2">
    <location>
        <begin position="124"/>
        <end position="323"/>
    </location>
</feature>
<feature type="disulfide bond" evidence="2">
    <location>
        <begin position="204"/>
        <end position="231"/>
    </location>
</feature>
<feature type="sequence conflict" description="In Ref. 1; CAA66961." evidence="8" ref="1">
    <original>I</original>
    <variation>L</variation>
    <location>
        <position position="177"/>
    </location>
</feature>
<feature type="sequence conflict" description="In Ref. 1; CAA66961." evidence="8" ref="1">
    <original>P</original>
    <variation>S</variation>
    <location>
        <position position="279"/>
    </location>
</feature>
<feature type="sequence conflict" description="In Ref. 1; CAA66961." evidence="8" ref="1">
    <original>N</original>
    <variation>G</variation>
    <location>
        <position position="293"/>
    </location>
</feature>
<reference key="1">
    <citation type="online journal article" date="1996" name="Plant Gene Register">
        <title>Eleven cDNA clones from Arabidopsis thaliana encoding isoperoxidases.</title>
        <authorList>
            <person name="Capelli N."/>
            <person name="Tognolli M."/>
            <person name="Flach J."/>
            <person name="Overney S."/>
            <person name="Penel C."/>
            <person name="Greppin H."/>
            <person name="Simon P."/>
        </authorList>
        <locator>PGR96-066</locator>
    </citation>
    <scope>NUCLEOTIDE SEQUENCE [MRNA]</scope>
    <source>
        <strain>cv. Columbia</strain>
    </source>
</reference>
<reference key="2">
    <citation type="journal article" date="1997" name="Plant Mol. Biol.">
        <title>Sequence and RT-PCR expression analysis of two peroxidases from Arabidopsis thaliana belonging to a novel evolutionary branch of plant peroxidases.</title>
        <authorList>
            <person name="Kjaersgaard I.V.H."/>
            <person name="Jespersen H.M."/>
            <person name="Rasmussen S.K."/>
            <person name="Welinder K.G."/>
        </authorList>
    </citation>
    <scope>NUCLEOTIDE SEQUENCE [MRNA]</scope>
    <source>
        <strain>cv. Columbia</strain>
    </source>
</reference>
<reference key="3">
    <citation type="journal article" date="1999" name="Nature">
        <title>Sequence and analysis of chromosome 2 of the plant Arabidopsis thaliana.</title>
        <authorList>
            <person name="Lin X."/>
            <person name="Kaul S."/>
            <person name="Rounsley S.D."/>
            <person name="Shea T.P."/>
            <person name="Benito M.-I."/>
            <person name="Town C.D."/>
            <person name="Fujii C.Y."/>
            <person name="Mason T.M."/>
            <person name="Bowman C.L."/>
            <person name="Barnstead M.E."/>
            <person name="Feldblyum T.V."/>
            <person name="Buell C.R."/>
            <person name="Ketchum K.A."/>
            <person name="Lee J.J."/>
            <person name="Ronning C.M."/>
            <person name="Koo H.L."/>
            <person name="Moffat K.S."/>
            <person name="Cronin L.A."/>
            <person name="Shen M."/>
            <person name="Pai G."/>
            <person name="Van Aken S."/>
            <person name="Umayam L."/>
            <person name="Tallon L.J."/>
            <person name="Gill J.E."/>
            <person name="Adams M.D."/>
            <person name="Carrera A.J."/>
            <person name="Creasy T.H."/>
            <person name="Goodman H.M."/>
            <person name="Somerville C.R."/>
            <person name="Copenhaver G.P."/>
            <person name="Preuss D."/>
            <person name="Nierman W.C."/>
            <person name="White O."/>
            <person name="Eisen J.A."/>
            <person name="Salzberg S.L."/>
            <person name="Fraser C.M."/>
            <person name="Venter J.C."/>
        </authorList>
    </citation>
    <scope>NUCLEOTIDE SEQUENCE [LARGE SCALE GENOMIC DNA]</scope>
    <source>
        <strain>cv. Columbia</strain>
    </source>
</reference>
<reference key="4">
    <citation type="journal article" date="2017" name="Plant J.">
        <title>Araport11: a complete reannotation of the Arabidopsis thaliana reference genome.</title>
        <authorList>
            <person name="Cheng C.Y."/>
            <person name="Krishnakumar V."/>
            <person name="Chan A.P."/>
            <person name="Thibaud-Nissen F."/>
            <person name="Schobel S."/>
            <person name="Town C.D."/>
        </authorList>
    </citation>
    <scope>GENOME REANNOTATION</scope>
    <source>
        <strain>cv. Columbia</strain>
    </source>
</reference>
<reference key="5">
    <citation type="submission" date="2002-03" db="EMBL/GenBank/DDBJ databases">
        <title>Full-length cDNA from Arabidopsis thaliana.</title>
        <authorList>
            <person name="Brover V.V."/>
            <person name="Troukhan M.E."/>
            <person name="Alexandrov N.A."/>
            <person name="Lu Y.-P."/>
            <person name="Flavell R.B."/>
            <person name="Feldmann K.A."/>
        </authorList>
    </citation>
    <scope>NUCLEOTIDE SEQUENCE [LARGE SCALE MRNA]</scope>
</reference>
<reference key="6">
    <citation type="journal article" date="2003" name="Science">
        <title>Empirical analysis of transcriptional activity in the Arabidopsis genome.</title>
        <authorList>
            <person name="Yamada K."/>
            <person name="Lim J."/>
            <person name="Dale J.M."/>
            <person name="Chen H."/>
            <person name="Shinn P."/>
            <person name="Palm C.J."/>
            <person name="Southwick A.M."/>
            <person name="Wu H.C."/>
            <person name="Kim C.J."/>
            <person name="Nguyen M."/>
            <person name="Pham P.K."/>
            <person name="Cheuk R.F."/>
            <person name="Karlin-Newmann G."/>
            <person name="Liu S.X."/>
            <person name="Lam B."/>
            <person name="Sakano H."/>
            <person name="Wu T."/>
            <person name="Yu G."/>
            <person name="Miranda M."/>
            <person name="Quach H.L."/>
            <person name="Tripp M."/>
            <person name="Chang C.H."/>
            <person name="Lee J.M."/>
            <person name="Toriumi M.J."/>
            <person name="Chan M.M."/>
            <person name="Tang C.C."/>
            <person name="Onodera C.S."/>
            <person name="Deng J.M."/>
            <person name="Akiyama K."/>
            <person name="Ansari Y."/>
            <person name="Arakawa T."/>
            <person name="Banh J."/>
            <person name="Banno F."/>
            <person name="Bowser L."/>
            <person name="Brooks S.Y."/>
            <person name="Carninci P."/>
            <person name="Chao Q."/>
            <person name="Choy N."/>
            <person name="Enju A."/>
            <person name="Goldsmith A.D."/>
            <person name="Gurjal M."/>
            <person name="Hansen N.F."/>
            <person name="Hayashizaki Y."/>
            <person name="Johnson-Hopson C."/>
            <person name="Hsuan V.W."/>
            <person name="Iida K."/>
            <person name="Karnes M."/>
            <person name="Khan S."/>
            <person name="Koesema E."/>
            <person name="Ishida J."/>
            <person name="Jiang P.X."/>
            <person name="Jones T."/>
            <person name="Kawai J."/>
            <person name="Kamiya A."/>
            <person name="Meyers C."/>
            <person name="Nakajima M."/>
            <person name="Narusaka M."/>
            <person name="Seki M."/>
            <person name="Sakurai T."/>
            <person name="Satou M."/>
            <person name="Tamse R."/>
            <person name="Vaysberg M."/>
            <person name="Wallender E.K."/>
            <person name="Wong C."/>
            <person name="Yamamura Y."/>
            <person name="Yuan S."/>
            <person name="Shinozaki K."/>
            <person name="Davis R.W."/>
            <person name="Theologis A."/>
            <person name="Ecker J.R."/>
        </authorList>
    </citation>
    <scope>NUCLEOTIDE SEQUENCE [LARGE SCALE MRNA] OF 33-327</scope>
    <source>
        <strain>cv. Columbia</strain>
    </source>
</reference>
<reference key="7">
    <citation type="journal article" date="1998" name="FEBS Lett.">
        <title>Computational analyses and annotations of the Arabidopsis peroxidase gene family.</title>
        <authorList>
            <person name="Oestergaard L."/>
            <person name="Pedersen A.G."/>
            <person name="Jespersen H.M."/>
            <person name="Brunak S."/>
            <person name="Welinder K.G."/>
        </authorList>
    </citation>
    <scope>CHARACTERIZATION</scope>
    <source>
        <strain>cv. Columbia</strain>
    </source>
</reference>
<reference key="8">
    <citation type="journal article" date="2000" name="Nat. Genet.">
        <title>The transcriptome of Arabidopsis thaliana during systemic acquired resistance.</title>
        <authorList>
            <person name="Maleck K."/>
            <person name="Levine A."/>
            <person name="Eulgem T."/>
            <person name="Morgan A."/>
            <person name="Schmid J."/>
            <person name="Lawton K.A."/>
            <person name="Dangl J.L."/>
            <person name="Dietrich R.A."/>
        </authorList>
    </citation>
    <scope>INDUCTION</scope>
    <source>
        <strain>cv. Wassilewskija</strain>
    </source>
</reference>
<reference key="9">
    <citation type="journal article" date="2000" name="Science">
        <title>Orchestrated transcription of key pathways in Arabidopsis by the circadian clock.</title>
        <authorList>
            <person name="Harmer S.L."/>
            <person name="Hogenesch J.B."/>
            <person name="Straume M."/>
            <person name="Chang H.-S."/>
            <person name="Han B."/>
            <person name="Zhu T."/>
            <person name="Wang X."/>
            <person name="Kreps J.A."/>
            <person name="Kay S.A."/>
        </authorList>
    </citation>
    <scope>INDUCTION</scope>
    <source>
        <strain>cv. Columbia</strain>
    </source>
</reference>
<reference key="10">
    <citation type="journal article" date="2001" name="Plant Cell">
        <title>Microarray analysis of diurnal and circadian-regulated genes in Arabidopsis.</title>
        <authorList>
            <person name="Schaffer R."/>
            <person name="Landgraf J."/>
            <person name="Accerbi M."/>
            <person name="Simon V."/>
            <person name="Larson M."/>
            <person name="Wisman E."/>
        </authorList>
    </citation>
    <scope>INDUCTION</scope>
    <source>
        <strain>cv. Columbia</strain>
    </source>
</reference>
<reference key="11">
    <citation type="journal article" date="2001" name="Plant Physiol. Biochem.">
        <title>Toward elucidating the global gene expression patterns of developing Arabidopsis: parallel analysis of 8300 genes by a high-density oligonucleotide probe array.</title>
        <authorList>
            <person name="Zhu T."/>
            <person name="Budworth P."/>
            <person name="Han B."/>
            <person name="Brown D."/>
            <person name="Chang H.-S."/>
            <person name="Zou G."/>
            <person name="Wang X."/>
        </authorList>
    </citation>
    <scope>DEVELOPMENTAL STAGE</scope>
    <source>
        <strain>cv. Columbia</strain>
    </source>
</reference>
<reference key="12">
    <citation type="journal article" date="2002" name="Plant Physiol.">
        <title>Transcriptional profiling reveals novel interactions between wounding, pathogen, abiotic stress, and hormonal responses in Arabidopsis.</title>
        <authorList>
            <person name="Cheong Y.H."/>
            <person name="Chang H.-S."/>
            <person name="Gupta R."/>
            <person name="Wang X."/>
            <person name="Zhu T."/>
            <person name="Luan S."/>
        </authorList>
    </citation>
    <scope>INDUCTION</scope>
    <source>
        <strain>cv. Columbia</strain>
    </source>
</reference>
<reference key="13">
    <citation type="journal article" date="2002" name="Gene">
        <title>Analysis and expression of the class III peroxidase large gene family in Arabidopsis thaliana.</title>
        <authorList>
            <person name="Tognolli M."/>
            <person name="Penel C."/>
            <person name="Greppin H."/>
            <person name="Simon P."/>
        </authorList>
    </citation>
    <scope>GENE FAMILY ORGANIZATION</scope>
    <scope>NOMENCLATURE</scope>
    <source>
        <strain>cv. Columbia</strain>
    </source>
</reference>